<protein>
    <recommendedName>
        <fullName>Metallothionein-like protein type 2</fullName>
    </recommendedName>
</protein>
<reference key="1">
    <citation type="journal article" date="1998" name="Plant Mol. Biol.">
        <title>Structure, expression and chromosomal localisation of the metallothionein-like gene family of tomato.</title>
        <authorList>
            <person name="Giritch A."/>
            <person name="Ganal M."/>
            <person name="Stephan U.W."/>
            <person name="Baumlein H."/>
        </authorList>
    </citation>
    <scope>NUCLEOTIDE SEQUENCE [MRNA]</scope>
    <source>
        <strain>cv. Bonner Beste</strain>
        <tissue>Root</tissue>
    </source>
</reference>
<feature type="chain" id="PRO_0000197401" description="Metallothionein-like protein type 2">
    <location>
        <begin position="1"/>
        <end position="73"/>
    </location>
</feature>
<keyword id="KW-0479">Metal-binding</keyword>
<keyword id="KW-0480">Metal-thiolate cluster</keyword>
<keyword id="KW-1185">Reference proteome</keyword>
<evidence type="ECO:0000305" key="1"/>
<sequence length="73" mass="7129">MSCCGGSCGCGSGCKCGSGCGGCGMYPDLESTTTFTIIEGVAPMKNYGVAEKATEGGNGCKCGSNCTCDPCNC</sequence>
<dbReference type="EMBL" id="Z68310">
    <property type="protein sequence ID" value="CAA92652.1"/>
    <property type="molecule type" value="mRNA"/>
</dbReference>
<dbReference type="PIR" id="T07109">
    <property type="entry name" value="T07109"/>
</dbReference>
<dbReference type="RefSeq" id="NP_001234291.1">
    <property type="nucleotide sequence ID" value="NM_001247362.2"/>
</dbReference>
<dbReference type="STRING" id="4081.Q43513"/>
<dbReference type="PaxDb" id="4081-Solyc06g076140.2.1"/>
<dbReference type="EnsemblPlants" id="Solyc06g076140.3.1">
    <property type="protein sequence ID" value="Solyc06g076140.3.1"/>
    <property type="gene ID" value="Solyc06g076140.3"/>
</dbReference>
<dbReference type="GeneID" id="778358"/>
<dbReference type="Gramene" id="Solyc06g076140.3.1">
    <property type="protein sequence ID" value="Solyc06g076140.3.1"/>
    <property type="gene ID" value="Solyc06g076140.3"/>
</dbReference>
<dbReference type="KEGG" id="sly:778358"/>
<dbReference type="eggNOG" id="KOG4738">
    <property type="taxonomic scope" value="Eukaryota"/>
</dbReference>
<dbReference type="HOGENOM" id="CLU_161105_1_0_1"/>
<dbReference type="InParanoid" id="Q43513"/>
<dbReference type="OMA" id="MYPDLES"/>
<dbReference type="OrthoDB" id="1111048at2759"/>
<dbReference type="PhylomeDB" id="Q43513"/>
<dbReference type="Proteomes" id="UP000004994">
    <property type="component" value="Chromosome 6"/>
</dbReference>
<dbReference type="GO" id="GO:0046872">
    <property type="term" value="F:metal ion binding"/>
    <property type="evidence" value="ECO:0007669"/>
    <property type="project" value="UniProtKB-KW"/>
</dbReference>
<dbReference type="InterPro" id="IPR000347">
    <property type="entry name" value="Metalthion_15p"/>
</dbReference>
<dbReference type="PANTHER" id="PTHR33543">
    <property type="entry name" value="METALLOTHIONEIN-LIKE PROTEIN 2A"/>
    <property type="match status" value="1"/>
</dbReference>
<dbReference type="PANTHER" id="PTHR33543:SF37">
    <property type="entry name" value="METALLOTHIONEIN-LIKE PROTEIN 4B"/>
    <property type="match status" value="1"/>
</dbReference>
<dbReference type="Pfam" id="PF01439">
    <property type="entry name" value="Metallothio_2"/>
    <property type="match status" value="1"/>
</dbReference>
<proteinExistence type="inferred from homology"/>
<comment type="function">
    <text>Metallothioneins have a high content of cysteine residues that bind various heavy metals.</text>
</comment>
<comment type="similarity">
    <text evidence="1">Belongs to the metallothionein superfamily. Type 15 family.</text>
</comment>
<accession>Q43513</accession>
<organism>
    <name type="scientific">Solanum lycopersicum</name>
    <name type="common">Tomato</name>
    <name type="synonym">Lycopersicon esculentum</name>
    <dbReference type="NCBI Taxonomy" id="4081"/>
    <lineage>
        <taxon>Eukaryota</taxon>
        <taxon>Viridiplantae</taxon>
        <taxon>Streptophyta</taxon>
        <taxon>Embryophyta</taxon>
        <taxon>Tracheophyta</taxon>
        <taxon>Spermatophyta</taxon>
        <taxon>Magnoliopsida</taxon>
        <taxon>eudicotyledons</taxon>
        <taxon>Gunneridae</taxon>
        <taxon>Pentapetalae</taxon>
        <taxon>asterids</taxon>
        <taxon>lamiids</taxon>
        <taxon>Solanales</taxon>
        <taxon>Solanaceae</taxon>
        <taxon>Solanoideae</taxon>
        <taxon>Solaneae</taxon>
        <taxon>Solanum</taxon>
        <taxon>Solanum subgen. Lycopersicon</taxon>
    </lineage>
</organism>
<name>MT2Y_SOLLC</name>